<comment type="catalytic activity">
    <reaction>
        <text>Endohydrolysis of (1-&gt;4)-alpha-D-glucosidic linkages in polysaccharides containing three or more (1-&gt;4)-alpha-linked D-glucose units.</text>
        <dbReference type="EC" id="3.2.1.1"/>
    </reaction>
</comment>
<comment type="cofactor">
    <cofactor evidence="1">
        <name>Ca(2+)</name>
        <dbReference type="ChEBI" id="CHEBI:29108"/>
    </cofactor>
    <text evidence="1">Binds 1 Ca(2+) ion per subunit.</text>
</comment>
<comment type="subunit">
    <text evidence="1">Monomer.</text>
</comment>
<comment type="induction">
    <text>By maltose, and repression by glucose.</text>
</comment>
<comment type="similarity">
    <text evidence="4">Belongs to the glycosyl hydrolase 13 family.</text>
</comment>
<organism>
    <name type="scientific">Streptomyces violaceus</name>
    <name type="common">Streptomyces venezuelae</name>
    <dbReference type="NCBI Taxonomy" id="1936"/>
    <lineage>
        <taxon>Bacteria</taxon>
        <taxon>Bacillati</taxon>
        <taxon>Actinomycetota</taxon>
        <taxon>Actinomycetes</taxon>
        <taxon>Kitasatosporales</taxon>
        <taxon>Streptomycetaceae</taxon>
        <taxon>Streptomyces</taxon>
    </lineage>
</organism>
<sequence>MARKTVAAALALVAGAAVAVTGNAPAQAVPPGEKDVTAVMFEWNFASVARECTDRLGPAGYGYVQVSPPQEHLQGGQWWTSYQPVSYKIAGRLGDRTAFKNMIDTCHAAGVKVVADSVINHMANGSGTGTGGTSFSKYDYPGLYSGSDMDDCRATISNYQDRANVQNCELVQLPDLDTGEDHVRGKIAGYLNDLASLGVDGFRIDAAKHMPAADLANIKSRLTNPNVFWKLEAIHGAGEAVSPSEYLGSGDVQEFRYARDLKRVLQGEKLSYLKNFGEAWGHMPSGQSGVFVDNHDTERGGDTLSYKDGANYTLASVFMLAWPYGSPDVHSGYEWTDKDAGPPNNGQVNACYTDGWKCQHAWREISSMVAFRNTARGQAVTNWWDNGNNAIAFGRGSKAYVAINHETSALTRTFQTSLPAGSYCDVQSNTPVTVNSSGQFTATLAANTAVALHVNATGCGSTPTTPPTTPPATSGASFNVTATTVVGQNIYVTGNRAELGNWAPASALKLDPATYPVWKLTVGLPAGTSFEYKYIRKDAAGNVTWESGANRTATVPASGQLVLNDTFRS</sequence>
<gene>
    <name type="primary">aml</name>
</gene>
<accession>P22998</accession>
<keyword id="KW-0106">Calcium</keyword>
<keyword id="KW-0119">Carbohydrate metabolism</keyword>
<keyword id="KW-0326">Glycosidase</keyword>
<keyword id="KW-0378">Hydrolase</keyword>
<keyword id="KW-0479">Metal-binding</keyword>
<keyword id="KW-0732">Signal</keyword>
<dbReference type="EC" id="3.2.1.1"/>
<dbReference type="EMBL" id="M25263">
    <property type="protein sequence ID" value="AAB36561.1"/>
    <property type="molecule type" value="Genomic_DNA"/>
</dbReference>
<dbReference type="PIR" id="JS0101">
    <property type="entry name" value="JS0101"/>
</dbReference>
<dbReference type="SMR" id="P22998"/>
<dbReference type="CAZy" id="CBM20">
    <property type="family name" value="Carbohydrate-Binding Module Family 20"/>
</dbReference>
<dbReference type="CAZy" id="GH13">
    <property type="family name" value="Glycoside Hydrolase Family 13"/>
</dbReference>
<dbReference type="GO" id="GO:0004556">
    <property type="term" value="F:alpha-amylase activity"/>
    <property type="evidence" value="ECO:0007669"/>
    <property type="project" value="UniProtKB-EC"/>
</dbReference>
<dbReference type="GO" id="GO:0046872">
    <property type="term" value="F:metal ion binding"/>
    <property type="evidence" value="ECO:0007669"/>
    <property type="project" value="UniProtKB-KW"/>
</dbReference>
<dbReference type="GO" id="GO:2001070">
    <property type="term" value="F:starch binding"/>
    <property type="evidence" value="ECO:0007669"/>
    <property type="project" value="InterPro"/>
</dbReference>
<dbReference type="GO" id="GO:0005975">
    <property type="term" value="P:carbohydrate metabolic process"/>
    <property type="evidence" value="ECO:0007669"/>
    <property type="project" value="InterPro"/>
</dbReference>
<dbReference type="CDD" id="cd11317">
    <property type="entry name" value="AmyAc_bac_euk_AmyA"/>
    <property type="match status" value="1"/>
</dbReference>
<dbReference type="CDD" id="cd05808">
    <property type="entry name" value="CBM20_alpha_amylase"/>
    <property type="match status" value="1"/>
</dbReference>
<dbReference type="FunFam" id="2.60.40.10:FF:000552">
    <property type="entry name" value="Related to glucoamylase"/>
    <property type="match status" value="1"/>
</dbReference>
<dbReference type="Gene3D" id="3.20.20.80">
    <property type="entry name" value="Glycosidases"/>
    <property type="match status" value="1"/>
</dbReference>
<dbReference type="Gene3D" id="2.60.40.1180">
    <property type="entry name" value="Golgi alpha-mannosidase II"/>
    <property type="match status" value="1"/>
</dbReference>
<dbReference type="Gene3D" id="2.60.40.10">
    <property type="entry name" value="Immunoglobulins"/>
    <property type="match status" value="1"/>
</dbReference>
<dbReference type="InterPro" id="IPR006048">
    <property type="entry name" value="A-amylase/branching_C"/>
</dbReference>
<dbReference type="InterPro" id="IPR031319">
    <property type="entry name" value="A-amylase_C"/>
</dbReference>
<dbReference type="InterPro" id="IPR006046">
    <property type="entry name" value="Alpha_amylase"/>
</dbReference>
<dbReference type="InterPro" id="IPR013784">
    <property type="entry name" value="Carb-bd-like_fold"/>
</dbReference>
<dbReference type="InterPro" id="IPR002044">
    <property type="entry name" value="CBM20"/>
</dbReference>
<dbReference type="InterPro" id="IPR006047">
    <property type="entry name" value="Glyco_hydro_13_cat_dom"/>
</dbReference>
<dbReference type="InterPro" id="IPR013780">
    <property type="entry name" value="Glyco_hydro_b"/>
</dbReference>
<dbReference type="InterPro" id="IPR017853">
    <property type="entry name" value="Glycoside_hydrolase_SF"/>
</dbReference>
<dbReference type="InterPro" id="IPR013783">
    <property type="entry name" value="Ig-like_fold"/>
</dbReference>
<dbReference type="PANTHER" id="PTHR43447">
    <property type="entry name" value="ALPHA-AMYLASE"/>
    <property type="match status" value="1"/>
</dbReference>
<dbReference type="Pfam" id="PF00128">
    <property type="entry name" value="Alpha-amylase"/>
    <property type="match status" value="1"/>
</dbReference>
<dbReference type="Pfam" id="PF02806">
    <property type="entry name" value="Alpha-amylase_C"/>
    <property type="match status" value="1"/>
</dbReference>
<dbReference type="Pfam" id="PF00686">
    <property type="entry name" value="CBM_20"/>
    <property type="match status" value="1"/>
</dbReference>
<dbReference type="PRINTS" id="PR00110">
    <property type="entry name" value="ALPHAAMYLASE"/>
</dbReference>
<dbReference type="SMART" id="SM00642">
    <property type="entry name" value="Aamy"/>
    <property type="match status" value="1"/>
</dbReference>
<dbReference type="SMART" id="SM00632">
    <property type="entry name" value="Aamy_C"/>
    <property type="match status" value="1"/>
</dbReference>
<dbReference type="SMART" id="SM01065">
    <property type="entry name" value="CBM_2"/>
    <property type="match status" value="1"/>
</dbReference>
<dbReference type="SUPFAM" id="SSF51445">
    <property type="entry name" value="(Trans)glycosidases"/>
    <property type="match status" value="1"/>
</dbReference>
<dbReference type="SUPFAM" id="SSF51011">
    <property type="entry name" value="Glycosyl hydrolase domain"/>
    <property type="match status" value="1"/>
</dbReference>
<dbReference type="SUPFAM" id="SSF49452">
    <property type="entry name" value="Starch-binding domain-like"/>
    <property type="match status" value="1"/>
</dbReference>
<dbReference type="PROSITE" id="PS51166">
    <property type="entry name" value="CBM20"/>
    <property type="match status" value="1"/>
</dbReference>
<feature type="signal peptide" evidence="2">
    <location>
        <begin position="1"/>
        <end position="28"/>
    </location>
</feature>
<feature type="chain" id="PRO_0000001344" description="Alpha-amylase">
    <location>
        <begin position="29"/>
        <end position="569"/>
    </location>
</feature>
<feature type="domain" description="CBM20" evidence="3">
    <location>
        <begin position="468"/>
        <end position="569"/>
    </location>
</feature>
<feature type="active site" description="Nucleophile" evidence="1">
    <location>
        <position position="205"/>
    </location>
</feature>
<feature type="active site" description="Proton donor" evidence="1">
    <location>
        <position position="232"/>
    </location>
</feature>
<feature type="binding site" evidence="1">
    <location>
        <position position="120"/>
    </location>
    <ligand>
        <name>Ca(2+)</name>
        <dbReference type="ChEBI" id="CHEBI:29108"/>
    </ligand>
</feature>
<feature type="binding site" evidence="1">
    <location>
        <position position="166"/>
    </location>
    <ligand>
        <name>Ca(2+)</name>
        <dbReference type="ChEBI" id="CHEBI:29108"/>
    </ligand>
</feature>
<feature type="binding site" evidence="1">
    <location>
        <position position="175"/>
    </location>
    <ligand>
        <name>Ca(2+)</name>
        <dbReference type="ChEBI" id="CHEBI:29108"/>
    </ligand>
</feature>
<feature type="binding site" evidence="1">
    <location>
        <position position="209"/>
    </location>
    <ligand>
        <name>Ca(2+)</name>
        <dbReference type="ChEBI" id="CHEBI:29108"/>
    </ligand>
</feature>
<feature type="site" description="Transition state stabilizer" evidence="1">
    <location>
        <position position="296"/>
    </location>
</feature>
<proteinExistence type="evidence at transcript level"/>
<evidence type="ECO:0000250" key="1"/>
<evidence type="ECO:0000255" key="2"/>
<evidence type="ECO:0000255" key="3">
    <source>
        <dbReference type="PROSITE-ProRule" id="PRU00594"/>
    </source>
</evidence>
<evidence type="ECO:0000305" key="4"/>
<protein>
    <recommendedName>
        <fullName>Alpha-amylase</fullName>
        <ecNumber>3.2.1.1</ecNumber>
    </recommendedName>
    <alternativeName>
        <fullName>1,4-alpha-D-glucan glucanohydrolase</fullName>
    </alternativeName>
</protein>
<reference key="1">
    <citation type="journal article" date="1988" name="Gene">
        <title>Cloning, characterisation and regulation of an alpha-amylase gene from Streptomyces venezuelae.</title>
        <authorList>
            <person name="Virolle M.-J."/>
            <person name="Long C.M."/>
            <person name="Chang S."/>
            <person name="Bibb M.J."/>
        </authorList>
    </citation>
    <scope>NUCLEOTIDE SEQUENCE [GENOMIC DNA]</scope>
    <source>
        <strain>ATCC 15068 / DSM 41111 / IMRU 3629</strain>
    </source>
</reference>
<name>AMY_STRVL</name>